<protein>
    <recommendedName>
        <fullName evidence="1">Phosphopantetheine adenylyltransferase</fullName>
        <ecNumber evidence="1">2.7.7.3</ecNumber>
    </recommendedName>
    <alternativeName>
        <fullName evidence="1">Dephospho-CoA pyrophosphorylase</fullName>
    </alternativeName>
    <alternativeName>
        <fullName evidence="1">Pantetheine-phosphate adenylyltransferase</fullName>
        <shortName evidence="1">PPAT</shortName>
    </alternativeName>
</protein>
<gene>
    <name evidence="1" type="primary">coaD</name>
    <name type="ordered locus">SARI_03915</name>
</gene>
<organism>
    <name type="scientific">Salmonella arizonae (strain ATCC BAA-731 / CDC346-86 / RSK2980)</name>
    <dbReference type="NCBI Taxonomy" id="41514"/>
    <lineage>
        <taxon>Bacteria</taxon>
        <taxon>Pseudomonadati</taxon>
        <taxon>Pseudomonadota</taxon>
        <taxon>Gammaproteobacteria</taxon>
        <taxon>Enterobacterales</taxon>
        <taxon>Enterobacteriaceae</taxon>
        <taxon>Salmonella</taxon>
    </lineage>
</organism>
<name>COAD_SALAR</name>
<feature type="chain" id="PRO_1000076783" description="Phosphopantetheine adenylyltransferase">
    <location>
        <begin position="1"/>
        <end position="159"/>
    </location>
</feature>
<feature type="binding site" evidence="1">
    <location>
        <begin position="10"/>
        <end position="11"/>
    </location>
    <ligand>
        <name>ATP</name>
        <dbReference type="ChEBI" id="CHEBI:30616"/>
    </ligand>
</feature>
<feature type="binding site" evidence="1">
    <location>
        <position position="10"/>
    </location>
    <ligand>
        <name>substrate</name>
    </ligand>
</feature>
<feature type="binding site" evidence="1">
    <location>
        <position position="18"/>
    </location>
    <ligand>
        <name>ATP</name>
        <dbReference type="ChEBI" id="CHEBI:30616"/>
    </ligand>
</feature>
<feature type="binding site" evidence="1">
    <location>
        <position position="42"/>
    </location>
    <ligand>
        <name>substrate</name>
    </ligand>
</feature>
<feature type="binding site" evidence="1">
    <location>
        <position position="74"/>
    </location>
    <ligand>
        <name>substrate</name>
    </ligand>
</feature>
<feature type="binding site" evidence="1">
    <location>
        <position position="88"/>
    </location>
    <ligand>
        <name>substrate</name>
    </ligand>
</feature>
<feature type="binding site" evidence="1">
    <location>
        <begin position="89"/>
        <end position="91"/>
    </location>
    <ligand>
        <name>ATP</name>
        <dbReference type="ChEBI" id="CHEBI:30616"/>
    </ligand>
</feature>
<feature type="binding site" evidence="1">
    <location>
        <position position="99"/>
    </location>
    <ligand>
        <name>ATP</name>
        <dbReference type="ChEBI" id="CHEBI:30616"/>
    </ligand>
</feature>
<feature type="binding site" evidence="1">
    <location>
        <begin position="124"/>
        <end position="130"/>
    </location>
    <ligand>
        <name>ATP</name>
        <dbReference type="ChEBI" id="CHEBI:30616"/>
    </ligand>
</feature>
<feature type="site" description="Transition state stabilizer" evidence="1">
    <location>
        <position position="18"/>
    </location>
</feature>
<sequence length="159" mass="17913">MQKRAIYPGTFDPITNGHLDIVTRATQMFDHVILAIAASPGKNPMFTLDERVALAQKATAHLSNVEVAGFSDLMANFARDRQANILIRGLRAVADFEYEMQLAHMNRHLMPQLESVFLMPSKEWSFISSSLVKEVARHQGDVTHFLPDNVHQALMNKLK</sequence>
<reference key="1">
    <citation type="submission" date="2007-11" db="EMBL/GenBank/DDBJ databases">
        <authorList>
            <consortium name="The Salmonella enterica serovar Arizonae Genome Sequencing Project"/>
            <person name="McClelland M."/>
            <person name="Sanderson E.K."/>
            <person name="Porwollik S."/>
            <person name="Spieth J."/>
            <person name="Clifton W.S."/>
            <person name="Fulton R."/>
            <person name="Chunyan W."/>
            <person name="Wollam A."/>
            <person name="Shah N."/>
            <person name="Pepin K."/>
            <person name="Bhonagiri V."/>
            <person name="Nash W."/>
            <person name="Johnson M."/>
            <person name="Thiruvilangam P."/>
            <person name="Wilson R."/>
        </authorList>
    </citation>
    <scope>NUCLEOTIDE SEQUENCE [LARGE SCALE GENOMIC DNA]</scope>
    <source>
        <strain>ATCC BAA-731 / CDC346-86 / RSK2980</strain>
    </source>
</reference>
<proteinExistence type="inferred from homology"/>
<dbReference type="EC" id="2.7.7.3" evidence="1"/>
<dbReference type="EMBL" id="CP000880">
    <property type="protein sequence ID" value="ABX23709.1"/>
    <property type="molecule type" value="Genomic_DNA"/>
</dbReference>
<dbReference type="SMR" id="A9MKP0"/>
<dbReference type="STRING" id="41514.SARI_03915"/>
<dbReference type="KEGG" id="ses:SARI_03915"/>
<dbReference type="HOGENOM" id="CLU_100149_0_1_6"/>
<dbReference type="UniPathway" id="UPA00241">
    <property type="reaction ID" value="UER00355"/>
</dbReference>
<dbReference type="Proteomes" id="UP000002084">
    <property type="component" value="Chromosome"/>
</dbReference>
<dbReference type="GO" id="GO:0005737">
    <property type="term" value="C:cytoplasm"/>
    <property type="evidence" value="ECO:0007669"/>
    <property type="project" value="UniProtKB-SubCell"/>
</dbReference>
<dbReference type="GO" id="GO:0005524">
    <property type="term" value="F:ATP binding"/>
    <property type="evidence" value="ECO:0007669"/>
    <property type="project" value="UniProtKB-KW"/>
</dbReference>
<dbReference type="GO" id="GO:0004595">
    <property type="term" value="F:pantetheine-phosphate adenylyltransferase activity"/>
    <property type="evidence" value="ECO:0007669"/>
    <property type="project" value="UniProtKB-UniRule"/>
</dbReference>
<dbReference type="GO" id="GO:0015937">
    <property type="term" value="P:coenzyme A biosynthetic process"/>
    <property type="evidence" value="ECO:0007669"/>
    <property type="project" value="UniProtKB-UniRule"/>
</dbReference>
<dbReference type="CDD" id="cd02163">
    <property type="entry name" value="PPAT"/>
    <property type="match status" value="1"/>
</dbReference>
<dbReference type="FunFam" id="3.40.50.620:FF:000012">
    <property type="entry name" value="Phosphopantetheine adenylyltransferase"/>
    <property type="match status" value="1"/>
</dbReference>
<dbReference type="Gene3D" id="3.40.50.620">
    <property type="entry name" value="HUPs"/>
    <property type="match status" value="1"/>
</dbReference>
<dbReference type="HAMAP" id="MF_00151">
    <property type="entry name" value="PPAT_bact"/>
    <property type="match status" value="1"/>
</dbReference>
<dbReference type="InterPro" id="IPR004821">
    <property type="entry name" value="Cyt_trans-like"/>
</dbReference>
<dbReference type="InterPro" id="IPR001980">
    <property type="entry name" value="PPAT"/>
</dbReference>
<dbReference type="InterPro" id="IPR014729">
    <property type="entry name" value="Rossmann-like_a/b/a_fold"/>
</dbReference>
<dbReference type="NCBIfam" id="TIGR01510">
    <property type="entry name" value="coaD_prev_kdtB"/>
    <property type="match status" value="1"/>
</dbReference>
<dbReference type="NCBIfam" id="TIGR00125">
    <property type="entry name" value="cyt_tran_rel"/>
    <property type="match status" value="1"/>
</dbReference>
<dbReference type="PANTHER" id="PTHR21342">
    <property type="entry name" value="PHOSPHOPANTETHEINE ADENYLYLTRANSFERASE"/>
    <property type="match status" value="1"/>
</dbReference>
<dbReference type="PANTHER" id="PTHR21342:SF1">
    <property type="entry name" value="PHOSPHOPANTETHEINE ADENYLYLTRANSFERASE"/>
    <property type="match status" value="1"/>
</dbReference>
<dbReference type="Pfam" id="PF01467">
    <property type="entry name" value="CTP_transf_like"/>
    <property type="match status" value="1"/>
</dbReference>
<dbReference type="PRINTS" id="PR01020">
    <property type="entry name" value="LPSBIOSNTHSS"/>
</dbReference>
<dbReference type="SUPFAM" id="SSF52374">
    <property type="entry name" value="Nucleotidylyl transferase"/>
    <property type="match status" value="1"/>
</dbReference>
<comment type="function">
    <text evidence="1">Reversibly transfers an adenylyl group from ATP to 4'-phosphopantetheine, yielding dephospho-CoA (dPCoA) and pyrophosphate.</text>
</comment>
<comment type="catalytic activity">
    <reaction evidence="1">
        <text>(R)-4'-phosphopantetheine + ATP + H(+) = 3'-dephospho-CoA + diphosphate</text>
        <dbReference type="Rhea" id="RHEA:19801"/>
        <dbReference type="ChEBI" id="CHEBI:15378"/>
        <dbReference type="ChEBI" id="CHEBI:30616"/>
        <dbReference type="ChEBI" id="CHEBI:33019"/>
        <dbReference type="ChEBI" id="CHEBI:57328"/>
        <dbReference type="ChEBI" id="CHEBI:61723"/>
        <dbReference type="EC" id="2.7.7.3"/>
    </reaction>
</comment>
<comment type="cofactor">
    <cofactor evidence="1">
        <name>Mg(2+)</name>
        <dbReference type="ChEBI" id="CHEBI:18420"/>
    </cofactor>
</comment>
<comment type="pathway">
    <text evidence="1">Cofactor biosynthesis; coenzyme A biosynthesis; CoA from (R)-pantothenate: step 4/5.</text>
</comment>
<comment type="subunit">
    <text evidence="1">Homohexamer.</text>
</comment>
<comment type="subcellular location">
    <subcellularLocation>
        <location evidence="1">Cytoplasm</location>
    </subcellularLocation>
</comment>
<comment type="similarity">
    <text evidence="1">Belongs to the bacterial CoaD family.</text>
</comment>
<keyword id="KW-0067">ATP-binding</keyword>
<keyword id="KW-0173">Coenzyme A biosynthesis</keyword>
<keyword id="KW-0963">Cytoplasm</keyword>
<keyword id="KW-0460">Magnesium</keyword>
<keyword id="KW-0547">Nucleotide-binding</keyword>
<keyword id="KW-0548">Nucleotidyltransferase</keyword>
<keyword id="KW-1185">Reference proteome</keyword>
<keyword id="KW-0808">Transferase</keyword>
<accession>A9MKP0</accession>
<evidence type="ECO:0000255" key="1">
    <source>
        <dbReference type="HAMAP-Rule" id="MF_00151"/>
    </source>
</evidence>